<gene>
    <name type="primary">ask</name>
    <name type="ordered locus">BQ2027_MB3736C</name>
</gene>
<accession>P0A4Z9</accession>
<accession>A0A1R3Y6J3</accession>
<accession>O69676</accession>
<accession>P47731</accession>
<accession>P97048</accession>
<accession>P97181</accession>
<accession>X2BPD7</accession>
<comment type="function">
    <text evidence="1">Catalyzes the phosphorylation of the beta-carboxyl group of aspartic acid with ATP to yield 4-phospho-L-aspartate, which is involved in the branched biosynthetic pathway leading to the biosynthesis of amino acids lysine, threonine, isoleucine and methionine.</text>
</comment>
<comment type="catalytic activity">
    <reaction>
        <text>L-aspartate + ATP = 4-phospho-L-aspartate + ADP</text>
        <dbReference type="Rhea" id="RHEA:23776"/>
        <dbReference type="ChEBI" id="CHEBI:29991"/>
        <dbReference type="ChEBI" id="CHEBI:30616"/>
        <dbReference type="ChEBI" id="CHEBI:57535"/>
        <dbReference type="ChEBI" id="CHEBI:456216"/>
        <dbReference type="EC" id="2.7.2.4"/>
    </reaction>
</comment>
<comment type="activity regulation">
    <text evidence="1">Feedback inhibition by lysine and threonine.</text>
</comment>
<comment type="pathway">
    <text>Amino-acid biosynthesis; L-lysine biosynthesis via DAP pathway; (S)-tetrahydrodipicolinate from L-aspartate: step 1/4.</text>
</comment>
<comment type="pathway">
    <text>Amino-acid biosynthesis; L-methionine biosynthesis via de novo pathway; L-homoserine from L-aspartate: step 1/3.</text>
</comment>
<comment type="pathway">
    <text>Amino-acid biosynthesis; L-threonine biosynthesis; L-threonine from L-aspartate: step 1/5.</text>
</comment>
<comment type="subunit">
    <text>Heterotetramer consisting of 2 isoforms Alpha (catalytic and regulation) and of a homodimer of 2 isoforms Beta (regulation).</text>
</comment>
<comment type="alternative products">
    <event type="alternative initiation"/>
    <isoform>
        <id>P0A4Z9-1</id>
        <name>Alpha</name>
        <name>Aspartokinase subunit alpha</name>
        <sequence type="displayed"/>
    </isoform>
    <isoform>
        <id>P0A4Z9-2</id>
        <name>Beta</name>
        <name>Aspartokinase subunit beta</name>
        <sequence type="described" ref="VSP_018661"/>
    </isoform>
</comment>
<comment type="similarity">
    <text evidence="3">Belongs to the aspartokinase family.</text>
</comment>
<sequence length="421" mass="44462">MALVVQKYGGSSVADAERIRRVAERIVATKKQGNDVVVVVSAMGDTTDDLLDLAQQVCPAPPPRELDMLLTAGERISNALVAMAIESLGAHARSFTGSQAGVITTGTHGNAKIIDVTPGRLQTALEEGRVVLVAGFQGVSQDTKDVTTLGRGGSDTTAVAMAAALGADVCEIYTDVDGIFSADPRIVRNARKLDTVTFEEMLEMAACGAKVLMLRCVEYARRHNIPVHVRSSYSDRPGTVVVGSIKDVPMEDPILTGVAHDRSEAKVTIVGLPDIPGYAAKVFRAVADADVNIDMVLQNVSKVEDGKTDITFTCSRDVGPAAVEKLDSLRNEIGFSQLLYDDHIGKVSLIGAGMRSHPGVTATFCEALAAVGVNIELISTSEIRISVLCRDTELDKAVVALHEAFGLGGDEEATVYAGTGR</sequence>
<organism>
    <name type="scientific">Mycobacterium bovis (strain ATCC BAA-935 / AF2122/97)</name>
    <dbReference type="NCBI Taxonomy" id="233413"/>
    <lineage>
        <taxon>Bacteria</taxon>
        <taxon>Bacillati</taxon>
        <taxon>Actinomycetota</taxon>
        <taxon>Actinomycetes</taxon>
        <taxon>Mycobacteriales</taxon>
        <taxon>Mycobacteriaceae</taxon>
        <taxon>Mycobacterium</taxon>
        <taxon>Mycobacterium tuberculosis complex</taxon>
    </lineage>
</organism>
<dbReference type="EC" id="2.7.2.4"/>
<dbReference type="EMBL" id="LT708304">
    <property type="protein sequence ID" value="SIU02365.1"/>
    <property type="molecule type" value="Genomic_DNA"/>
</dbReference>
<dbReference type="EMBL" id="Z18290">
    <property type="protein sequence ID" value="CAA79160.1"/>
    <property type="molecule type" value="Genomic_DNA"/>
</dbReference>
<dbReference type="PIR" id="S42425">
    <property type="entry name" value="S42425"/>
</dbReference>
<dbReference type="RefSeq" id="NP_857374.1">
    <property type="nucleotide sequence ID" value="NC_002945.3"/>
</dbReference>
<dbReference type="RefSeq" id="WP_003419828.1">
    <property type="nucleotide sequence ID" value="NC_002945.4"/>
</dbReference>
<dbReference type="SMR" id="P0A4Z9"/>
<dbReference type="KEGG" id="mbo:BQ2027_MB3736C"/>
<dbReference type="PATRIC" id="fig|233413.5.peg.4089"/>
<dbReference type="UniPathway" id="UPA00034">
    <property type="reaction ID" value="UER00015"/>
</dbReference>
<dbReference type="UniPathway" id="UPA00050">
    <property type="reaction ID" value="UER00461"/>
</dbReference>
<dbReference type="UniPathway" id="UPA00051">
    <property type="reaction ID" value="UER00462"/>
</dbReference>
<dbReference type="Proteomes" id="UP000001419">
    <property type="component" value="Chromosome"/>
</dbReference>
<dbReference type="GO" id="GO:0005829">
    <property type="term" value="C:cytosol"/>
    <property type="evidence" value="ECO:0007669"/>
    <property type="project" value="TreeGrafter"/>
</dbReference>
<dbReference type="GO" id="GO:0004072">
    <property type="term" value="F:aspartate kinase activity"/>
    <property type="evidence" value="ECO:0007669"/>
    <property type="project" value="UniProtKB-EC"/>
</dbReference>
<dbReference type="GO" id="GO:0005524">
    <property type="term" value="F:ATP binding"/>
    <property type="evidence" value="ECO:0007669"/>
    <property type="project" value="UniProtKB-KW"/>
</dbReference>
<dbReference type="GO" id="GO:0019877">
    <property type="term" value="P:diaminopimelate biosynthetic process"/>
    <property type="evidence" value="ECO:0007669"/>
    <property type="project" value="UniProtKB-KW"/>
</dbReference>
<dbReference type="GO" id="GO:0009090">
    <property type="term" value="P:homoserine biosynthetic process"/>
    <property type="evidence" value="ECO:0007669"/>
    <property type="project" value="TreeGrafter"/>
</dbReference>
<dbReference type="GO" id="GO:0009089">
    <property type="term" value="P:lysine biosynthetic process via diaminopimelate"/>
    <property type="evidence" value="ECO:0007669"/>
    <property type="project" value="UniProtKB-UniPathway"/>
</dbReference>
<dbReference type="GO" id="GO:0009088">
    <property type="term" value="P:threonine biosynthetic process"/>
    <property type="evidence" value="ECO:0007669"/>
    <property type="project" value="UniProtKB-UniPathway"/>
</dbReference>
<dbReference type="CDD" id="cd04261">
    <property type="entry name" value="AAK_AKii-LysC-BS"/>
    <property type="match status" value="1"/>
</dbReference>
<dbReference type="CDD" id="cd04923">
    <property type="entry name" value="ACT_AK-LysC-DapG-like_2"/>
    <property type="match status" value="1"/>
</dbReference>
<dbReference type="CDD" id="cd04913">
    <property type="entry name" value="ACT_AKii-LysC-BS-like_1"/>
    <property type="match status" value="1"/>
</dbReference>
<dbReference type="FunFam" id="3.30.2130.10:FF:000002">
    <property type="entry name" value="Aspartokinase"/>
    <property type="match status" value="1"/>
</dbReference>
<dbReference type="FunFam" id="3.40.1160.10:FF:000002">
    <property type="entry name" value="Aspartokinase"/>
    <property type="match status" value="1"/>
</dbReference>
<dbReference type="Gene3D" id="3.40.1160.10">
    <property type="entry name" value="Acetylglutamate kinase-like"/>
    <property type="match status" value="1"/>
</dbReference>
<dbReference type="Gene3D" id="3.30.2130.10">
    <property type="entry name" value="VC0802-like"/>
    <property type="match status" value="1"/>
</dbReference>
<dbReference type="InterPro" id="IPR036393">
    <property type="entry name" value="AceGlu_kinase-like_sf"/>
</dbReference>
<dbReference type="InterPro" id="IPR045865">
    <property type="entry name" value="ACT-like_dom_sf"/>
</dbReference>
<dbReference type="InterPro" id="IPR054352">
    <property type="entry name" value="ACT_Aspartokinase"/>
</dbReference>
<dbReference type="InterPro" id="IPR002912">
    <property type="entry name" value="ACT_dom"/>
</dbReference>
<dbReference type="InterPro" id="IPR041740">
    <property type="entry name" value="AKii-LysC-BS"/>
</dbReference>
<dbReference type="InterPro" id="IPR001048">
    <property type="entry name" value="Asp/Glu/Uridylate_kinase"/>
</dbReference>
<dbReference type="InterPro" id="IPR005260">
    <property type="entry name" value="Asp_kin_monofn"/>
</dbReference>
<dbReference type="InterPro" id="IPR001341">
    <property type="entry name" value="Asp_kinase"/>
</dbReference>
<dbReference type="InterPro" id="IPR018042">
    <property type="entry name" value="Aspartate_kinase_CS"/>
</dbReference>
<dbReference type="NCBIfam" id="TIGR00656">
    <property type="entry name" value="asp_kin_monofn"/>
    <property type="match status" value="1"/>
</dbReference>
<dbReference type="NCBIfam" id="TIGR00657">
    <property type="entry name" value="asp_kinases"/>
    <property type="match status" value="1"/>
</dbReference>
<dbReference type="NCBIfam" id="NF005153">
    <property type="entry name" value="PRK06635.1-1"/>
    <property type="match status" value="1"/>
</dbReference>
<dbReference type="NCBIfam" id="NF005154">
    <property type="entry name" value="PRK06635.1-2"/>
    <property type="match status" value="1"/>
</dbReference>
<dbReference type="NCBIfam" id="NF005155">
    <property type="entry name" value="PRK06635.1-4"/>
    <property type="match status" value="1"/>
</dbReference>
<dbReference type="PANTHER" id="PTHR21499">
    <property type="entry name" value="ASPARTATE KINASE"/>
    <property type="match status" value="1"/>
</dbReference>
<dbReference type="PANTHER" id="PTHR21499:SF3">
    <property type="entry name" value="ASPARTOKINASE"/>
    <property type="match status" value="1"/>
</dbReference>
<dbReference type="Pfam" id="PF00696">
    <property type="entry name" value="AA_kinase"/>
    <property type="match status" value="1"/>
</dbReference>
<dbReference type="Pfam" id="PF01842">
    <property type="entry name" value="ACT"/>
    <property type="match status" value="1"/>
</dbReference>
<dbReference type="Pfam" id="PF22468">
    <property type="entry name" value="ACT_9"/>
    <property type="match status" value="1"/>
</dbReference>
<dbReference type="PIRSF" id="PIRSF000726">
    <property type="entry name" value="Asp_kin"/>
    <property type="match status" value="1"/>
</dbReference>
<dbReference type="SUPFAM" id="SSF55021">
    <property type="entry name" value="ACT-like"/>
    <property type="match status" value="2"/>
</dbReference>
<dbReference type="SUPFAM" id="SSF53633">
    <property type="entry name" value="Carbamate kinase-like"/>
    <property type="match status" value="1"/>
</dbReference>
<dbReference type="PROSITE" id="PS51671">
    <property type="entry name" value="ACT"/>
    <property type="match status" value="1"/>
</dbReference>
<dbReference type="PROSITE" id="PS00324">
    <property type="entry name" value="ASPARTOKINASE"/>
    <property type="match status" value="1"/>
</dbReference>
<feature type="chain" id="PRO_0000002381" description="Aspartokinase">
    <location>
        <begin position="1"/>
        <end position="421"/>
    </location>
</feature>
<feature type="domain" description="ACT 1" evidence="2">
    <location>
        <begin position="267"/>
        <end position="348"/>
    </location>
</feature>
<feature type="domain" description="ACT 2" evidence="2">
    <location>
        <begin position="349"/>
        <end position="421"/>
    </location>
</feature>
<feature type="binding site" evidence="1">
    <location>
        <begin position="7"/>
        <end position="10"/>
    </location>
    <ligand>
        <name>ATP</name>
        <dbReference type="ChEBI" id="CHEBI:30616"/>
    </ligand>
</feature>
<feature type="binding site" evidence="1">
    <location>
        <begin position="25"/>
        <end position="30"/>
    </location>
    <ligand>
        <name>substrate</name>
    </ligand>
</feature>
<feature type="binding site" evidence="1">
    <location>
        <position position="41"/>
    </location>
    <ligand>
        <name>ATP</name>
        <dbReference type="ChEBI" id="CHEBI:30616"/>
    </ligand>
</feature>
<feature type="binding site" evidence="1">
    <location>
        <begin position="45"/>
        <end position="49"/>
    </location>
    <ligand>
        <name>substrate</name>
    </ligand>
</feature>
<feature type="binding site" evidence="1">
    <location>
        <position position="74"/>
    </location>
    <ligand>
        <name>substrate</name>
    </ligand>
</feature>
<feature type="binding site" evidence="1">
    <location>
        <begin position="125"/>
        <end position="126"/>
    </location>
    <ligand>
        <name>substrate</name>
    </ligand>
</feature>
<feature type="binding site" evidence="1">
    <location>
        <begin position="151"/>
        <end position="154"/>
    </location>
    <ligand>
        <name>substrate</name>
    </ligand>
</feature>
<feature type="binding site" evidence="1">
    <location>
        <position position="154"/>
    </location>
    <ligand>
        <name>substrate</name>
    </ligand>
</feature>
<feature type="binding site" evidence="1">
    <location>
        <begin position="174"/>
        <end position="175"/>
    </location>
    <ligand>
        <name>ATP</name>
        <dbReference type="ChEBI" id="CHEBI:30616"/>
    </ligand>
</feature>
<feature type="binding site" evidence="1">
    <location>
        <begin position="180"/>
        <end position="185"/>
    </location>
    <ligand>
        <name>ATP</name>
        <dbReference type="ChEBI" id="CHEBI:30616"/>
    </ligand>
</feature>
<feature type="binding site" evidence="1">
    <location>
        <position position="210"/>
    </location>
    <ligand>
        <name>ATP</name>
        <dbReference type="ChEBI" id="CHEBI:30616"/>
    </ligand>
</feature>
<feature type="binding site" evidence="1">
    <location>
        <begin position="274"/>
        <end position="279"/>
    </location>
    <ligand>
        <name>substrate</name>
    </ligand>
</feature>
<feature type="binding site" evidence="1">
    <location>
        <position position="274"/>
    </location>
    <ligand>
        <name>substrate</name>
    </ligand>
</feature>
<feature type="binding site" evidence="1">
    <location>
        <begin position="292"/>
        <end position="294"/>
    </location>
    <ligand>
        <name>substrate</name>
    </ligand>
</feature>
<feature type="binding site" evidence="1">
    <location>
        <position position="298"/>
    </location>
    <ligand>
        <name>substrate</name>
    </ligand>
</feature>
<feature type="binding site" evidence="1">
    <location>
        <begin position="360"/>
        <end position="361"/>
    </location>
    <ligand>
        <name>substrate</name>
    </ligand>
</feature>
<feature type="binding site" evidence="1">
    <location>
        <begin position="374"/>
        <end position="375"/>
    </location>
    <ligand>
        <name>substrate</name>
    </ligand>
</feature>
<feature type="binding site" evidence="1">
    <location>
        <begin position="381"/>
        <end position="382"/>
    </location>
    <ligand>
        <name>substrate</name>
    </ligand>
</feature>
<feature type="site" description="Contribution to the catalysis" evidence="1">
    <location>
        <position position="7"/>
    </location>
</feature>
<feature type="site" description="Contribution to the catalysis" evidence="1">
    <location>
        <position position="74"/>
    </location>
</feature>
<feature type="splice variant" id="VSP_018661" description="In isoform Beta." evidence="3">
    <location>
        <begin position="1"/>
        <end position="249"/>
    </location>
</feature>
<name>AK_MYCBO</name>
<keyword id="KW-0024">Alternative initiation</keyword>
<keyword id="KW-0028">Amino-acid biosynthesis</keyword>
<keyword id="KW-0067">ATP-binding</keyword>
<keyword id="KW-0220">Diaminopimelate biosynthesis</keyword>
<keyword id="KW-0418">Kinase</keyword>
<keyword id="KW-0457">Lysine biosynthesis</keyword>
<keyword id="KW-0547">Nucleotide-binding</keyword>
<keyword id="KW-1185">Reference proteome</keyword>
<keyword id="KW-0677">Repeat</keyword>
<keyword id="KW-0808">Transferase</keyword>
<protein>
    <recommendedName>
        <fullName>Aspartokinase</fullName>
        <ecNumber>2.7.2.4</ecNumber>
    </recommendedName>
    <alternativeName>
        <fullName>Aspartate kinase</fullName>
        <shortName>ASK</shortName>
    </alternativeName>
</protein>
<reference key="1">
    <citation type="journal article" date="2003" name="Proc. Natl. Acad. Sci. U.S.A.">
        <title>The complete genome sequence of Mycobacterium bovis.</title>
        <authorList>
            <person name="Garnier T."/>
            <person name="Eiglmeier K."/>
            <person name="Camus J.-C."/>
            <person name="Medina N."/>
            <person name="Mansoor H."/>
            <person name="Pryor M."/>
            <person name="Duthoy S."/>
            <person name="Grondin S."/>
            <person name="Lacroix C."/>
            <person name="Monsempe C."/>
            <person name="Simon S."/>
            <person name="Harris B."/>
            <person name="Atkin R."/>
            <person name="Doggett J."/>
            <person name="Mayes R."/>
            <person name="Keating L."/>
            <person name="Wheeler P.R."/>
            <person name="Parkhill J."/>
            <person name="Barrell B.G."/>
            <person name="Cole S.T."/>
            <person name="Gordon S.V."/>
            <person name="Hewinson R.G."/>
        </authorList>
    </citation>
    <scope>NUCLEOTIDE SEQUENCE [LARGE SCALE GENOMIC DNA]</scope>
    <source>
        <strain>ATCC BAA-935 / AF2122/97</strain>
    </source>
</reference>
<reference key="2">
    <citation type="journal article" date="2017" name="Genome Announc.">
        <title>Updated reference genome sequence and annotation of Mycobacterium bovis AF2122/97.</title>
        <authorList>
            <person name="Malone K.M."/>
            <person name="Farrell D."/>
            <person name="Stuber T.P."/>
            <person name="Schubert O.T."/>
            <person name="Aebersold R."/>
            <person name="Robbe-Austerman S."/>
            <person name="Gordon S.V."/>
        </authorList>
    </citation>
    <scope>NUCLEOTIDE SEQUENCE [LARGE SCALE GENOMIC DNA]</scope>
    <scope>GENOME REANNOTATION</scope>
    <source>
        <strain>ATCC BAA-935 / AF2122/97</strain>
    </source>
</reference>
<reference key="3">
    <citation type="journal article" date="1994" name="Mol. Microbiol.">
        <title>Isolation and characterization of the aspartokinase and aspartate semialdehyde dehydrogenase operon from mycobacteria.</title>
        <authorList>
            <person name="Cirillo J.D."/>
            <person name="Weisbrod T.R."/>
            <person name="Pascopella L."/>
            <person name="Bloom B.R."/>
            <person name="Jacobs W.R. Jr."/>
        </authorList>
    </citation>
    <scope>NUCLEOTIDE SEQUENCE [GENOMIC DNA] OF 297-421</scope>
    <source>
        <strain>BCG / Pasteur</strain>
    </source>
</reference>
<proteinExistence type="inferred from homology"/>
<evidence type="ECO:0000250" key="1"/>
<evidence type="ECO:0000255" key="2">
    <source>
        <dbReference type="PROSITE-ProRule" id="PRU01007"/>
    </source>
</evidence>
<evidence type="ECO:0000305" key="3"/>